<organism>
    <name type="scientific">Barbarea verna</name>
    <name type="common">Land cress</name>
    <name type="synonym">Erysimum vernum</name>
    <dbReference type="NCBI Taxonomy" id="50458"/>
    <lineage>
        <taxon>Eukaryota</taxon>
        <taxon>Viridiplantae</taxon>
        <taxon>Streptophyta</taxon>
        <taxon>Embryophyta</taxon>
        <taxon>Tracheophyta</taxon>
        <taxon>Spermatophyta</taxon>
        <taxon>Magnoliopsida</taxon>
        <taxon>eudicotyledons</taxon>
        <taxon>Gunneridae</taxon>
        <taxon>Pentapetalae</taxon>
        <taxon>rosids</taxon>
        <taxon>malvids</taxon>
        <taxon>Brassicales</taxon>
        <taxon>Brassicaceae</taxon>
        <taxon>Cardamineae</taxon>
        <taxon>Barbarea</taxon>
    </lineage>
</organism>
<name>ATPA_BARVE</name>
<accession>A4QK90</accession>
<feature type="chain" id="PRO_0000339072" description="ATP synthase subunit alpha, chloroplastic">
    <location>
        <begin position="1"/>
        <end position="507"/>
    </location>
</feature>
<feature type="binding site" evidence="2">
    <location>
        <begin position="170"/>
        <end position="177"/>
    </location>
    <ligand>
        <name>ATP</name>
        <dbReference type="ChEBI" id="CHEBI:30616"/>
    </ligand>
</feature>
<feature type="site" description="Required for activity" evidence="2">
    <location>
        <position position="363"/>
    </location>
</feature>
<feature type="modified residue" description="Phosphothreonine" evidence="1">
    <location>
        <position position="257"/>
    </location>
</feature>
<evidence type="ECO:0000250" key="1">
    <source>
        <dbReference type="UniProtKB" id="P56757"/>
    </source>
</evidence>
<evidence type="ECO:0000255" key="2">
    <source>
        <dbReference type="HAMAP-Rule" id="MF_01346"/>
    </source>
</evidence>
<geneLocation type="chloroplast"/>
<sequence length="507" mass="55204">MVTIRADEISNIIRERIEQYNREVTIVNTGTVLQVGDGIARIYGLDEVMAGELVEFEEGTIGIALNLESNNVGVVLMGDGLMIQEGSSVKATGKIAQIPVSEAYLGRVINALANPIDGRGKISASESRLIESPAPGIISRRSVYEPLQTGLIAIDSMIPIGRGQRELIIGDRQTGKTAVATDTILNQQGQNVICVYVAIGQKASSVAQVVTGLQERGAMEYTIVVAETADAPAALQYLAPYTGAALAEYFMYREQHTLIIYDDLSKQAQAYRQMSLLLRRPPGREAYPGDVFYLHSRLLERAAKLSSQLGEGSMTALPIVETQSGDVSAYIPTNVISITDGQIFLSADLFNAGIRPAINVGISVSRVGSAAQIKAMKQVAGKLKLELAQFAELEAFAQFSSDLDKATQNQLARGQRLRELLKQSQSAPLTVEEQVMTIYTGTNGYLDGLEIGQVRKFLVQLRTYLKTNKPQFQEIISSTKTLTAEAESVLKEGIQEQLERFLLQEKL</sequence>
<gene>
    <name evidence="2" type="primary">atpA</name>
</gene>
<dbReference type="EC" id="7.1.2.2" evidence="2"/>
<dbReference type="EMBL" id="AP009370">
    <property type="protein sequence ID" value="BAF50095.1"/>
    <property type="molecule type" value="Genomic_DNA"/>
</dbReference>
<dbReference type="RefSeq" id="YP_001123271.1">
    <property type="nucleotide sequence ID" value="NC_009269.1"/>
</dbReference>
<dbReference type="SMR" id="A4QK90"/>
<dbReference type="GeneID" id="4961863"/>
<dbReference type="GO" id="GO:0009535">
    <property type="term" value="C:chloroplast thylakoid membrane"/>
    <property type="evidence" value="ECO:0007669"/>
    <property type="project" value="UniProtKB-SubCell"/>
</dbReference>
<dbReference type="GO" id="GO:0045259">
    <property type="term" value="C:proton-transporting ATP synthase complex"/>
    <property type="evidence" value="ECO:0007669"/>
    <property type="project" value="UniProtKB-KW"/>
</dbReference>
<dbReference type="GO" id="GO:0043531">
    <property type="term" value="F:ADP binding"/>
    <property type="evidence" value="ECO:0007669"/>
    <property type="project" value="TreeGrafter"/>
</dbReference>
<dbReference type="GO" id="GO:0005524">
    <property type="term" value="F:ATP binding"/>
    <property type="evidence" value="ECO:0007669"/>
    <property type="project" value="UniProtKB-UniRule"/>
</dbReference>
<dbReference type="GO" id="GO:0046933">
    <property type="term" value="F:proton-transporting ATP synthase activity, rotational mechanism"/>
    <property type="evidence" value="ECO:0007669"/>
    <property type="project" value="UniProtKB-UniRule"/>
</dbReference>
<dbReference type="CDD" id="cd18113">
    <property type="entry name" value="ATP-synt_F1_alpha_C"/>
    <property type="match status" value="1"/>
</dbReference>
<dbReference type="CDD" id="cd18116">
    <property type="entry name" value="ATP-synt_F1_alpha_N"/>
    <property type="match status" value="1"/>
</dbReference>
<dbReference type="CDD" id="cd01132">
    <property type="entry name" value="F1-ATPase_alpha_CD"/>
    <property type="match status" value="1"/>
</dbReference>
<dbReference type="FunFam" id="1.20.150.20:FF:000001">
    <property type="entry name" value="ATP synthase subunit alpha"/>
    <property type="match status" value="1"/>
</dbReference>
<dbReference type="FunFam" id="2.40.30.20:FF:000001">
    <property type="entry name" value="ATP synthase subunit alpha"/>
    <property type="match status" value="1"/>
</dbReference>
<dbReference type="FunFam" id="3.40.50.300:FF:000002">
    <property type="entry name" value="ATP synthase subunit alpha"/>
    <property type="match status" value="1"/>
</dbReference>
<dbReference type="Gene3D" id="2.40.30.20">
    <property type="match status" value="1"/>
</dbReference>
<dbReference type="Gene3D" id="1.20.150.20">
    <property type="entry name" value="ATP synthase alpha/beta chain, C-terminal domain"/>
    <property type="match status" value="1"/>
</dbReference>
<dbReference type="Gene3D" id="3.40.50.300">
    <property type="entry name" value="P-loop containing nucleotide triphosphate hydrolases"/>
    <property type="match status" value="1"/>
</dbReference>
<dbReference type="HAMAP" id="MF_01346">
    <property type="entry name" value="ATP_synth_alpha_bact"/>
    <property type="match status" value="1"/>
</dbReference>
<dbReference type="InterPro" id="IPR023366">
    <property type="entry name" value="ATP_synth_asu-like_sf"/>
</dbReference>
<dbReference type="InterPro" id="IPR000793">
    <property type="entry name" value="ATP_synth_asu_C"/>
</dbReference>
<dbReference type="InterPro" id="IPR038376">
    <property type="entry name" value="ATP_synth_asu_C_sf"/>
</dbReference>
<dbReference type="InterPro" id="IPR033732">
    <property type="entry name" value="ATP_synth_F1_a_nt-bd_dom"/>
</dbReference>
<dbReference type="InterPro" id="IPR005294">
    <property type="entry name" value="ATP_synth_F1_asu"/>
</dbReference>
<dbReference type="InterPro" id="IPR020003">
    <property type="entry name" value="ATPase_a/bsu_AS"/>
</dbReference>
<dbReference type="InterPro" id="IPR004100">
    <property type="entry name" value="ATPase_F1/V1/A1_a/bsu_N"/>
</dbReference>
<dbReference type="InterPro" id="IPR036121">
    <property type="entry name" value="ATPase_F1/V1/A1_a/bsu_N_sf"/>
</dbReference>
<dbReference type="InterPro" id="IPR000194">
    <property type="entry name" value="ATPase_F1/V1/A1_a/bsu_nucl-bd"/>
</dbReference>
<dbReference type="InterPro" id="IPR027417">
    <property type="entry name" value="P-loop_NTPase"/>
</dbReference>
<dbReference type="NCBIfam" id="TIGR00962">
    <property type="entry name" value="atpA"/>
    <property type="match status" value="1"/>
</dbReference>
<dbReference type="NCBIfam" id="NF009884">
    <property type="entry name" value="PRK13343.1"/>
    <property type="match status" value="1"/>
</dbReference>
<dbReference type="PANTHER" id="PTHR48082">
    <property type="entry name" value="ATP SYNTHASE SUBUNIT ALPHA, MITOCHONDRIAL"/>
    <property type="match status" value="1"/>
</dbReference>
<dbReference type="PANTHER" id="PTHR48082:SF2">
    <property type="entry name" value="ATP SYNTHASE SUBUNIT ALPHA, MITOCHONDRIAL"/>
    <property type="match status" value="1"/>
</dbReference>
<dbReference type="Pfam" id="PF00006">
    <property type="entry name" value="ATP-synt_ab"/>
    <property type="match status" value="1"/>
</dbReference>
<dbReference type="Pfam" id="PF00306">
    <property type="entry name" value="ATP-synt_ab_C"/>
    <property type="match status" value="1"/>
</dbReference>
<dbReference type="Pfam" id="PF02874">
    <property type="entry name" value="ATP-synt_ab_N"/>
    <property type="match status" value="1"/>
</dbReference>
<dbReference type="PIRSF" id="PIRSF039088">
    <property type="entry name" value="F_ATPase_subunit_alpha"/>
    <property type="match status" value="1"/>
</dbReference>
<dbReference type="SUPFAM" id="SSF47917">
    <property type="entry name" value="C-terminal domain of alpha and beta subunits of F1 ATP synthase"/>
    <property type="match status" value="1"/>
</dbReference>
<dbReference type="SUPFAM" id="SSF50615">
    <property type="entry name" value="N-terminal domain of alpha and beta subunits of F1 ATP synthase"/>
    <property type="match status" value="1"/>
</dbReference>
<dbReference type="SUPFAM" id="SSF52540">
    <property type="entry name" value="P-loop containing nucleoside triphosphate hydrolases"/>
    <property type="match status" value="1"/>
</dbReference>
<dbReference type="PROSITE" id="PS00152">
    <property type="entry name" value="ATPASE_ALPHA_BETA"/>
    <property type="match status" value="1"/>
</dbReference>
<keyword id="KW-0066">ATP synthesis</keyword>
<keyword id="KW-0067">ATP-binding</keyword>
<keyword id="KW-0139">CF(1)</keyword>
<keyword id="KW-0150">Chloroplast</keyword>
<keyword id="KW-0375">Hydrogen ion transport</keyword>
<keyword id="KW-0406">Ion transport</keyword>
<keyword id="KW-0472">Membrane</keyword>
<keyword id="KW-0547">Nucleotide-binding</keyword>
<keyword id="KW-0597">Phosphoprotein</keyword>
<keyword id="KW-0934">Plastid</keyword>
<keyword id="KW-0793">Thylakoid</keyword>
<keyword id="KW-1278">Translocase</keyword>
<keyword id="KW-0813">Transport</keyword>
<protein>
    <recommendedName>
        <fullName evidence="2">ATP synthase subunit alpha, chloroplastic</fullName>
        <ecNumber evidence="2">7.1.2.2</ecNumber>
    </recommendedName>
    <alternativeName>
        <fullName evidence="2">ATP synthase F1 sector subunit alpha</fullName>
    </alternativeName>
    <alternativeName>
        <fullName evidence="2">F-ATPase subunit alpha</fullName>
    </alternativeName>
</protein>
<proteinExistence type="inferred from homology"/>
<comment type="function">
    <text evidence="2">Produces ATP from ADP in the presence of a proton gradient across the membrane. The alpha chain is a regulatory subunit.</text>
</comment>
<comment type="catalytic activity">
    <reaction evidence="2">
        <text>ATP + H2O + 4 H(+)(in) = ADP + phosphate + 5 H(+)(out)</text>
        <dbReference type="Rhea" id="RHEA:57720"/>
        <dbReference type="ChEBI" id="CHEBI:15377"/>
        <dbReference type="ChEBI" id="CHEBI:15378"/>
        <dbReference type="ChEBI" id="CHEBI:30616"/>
        <dbReference type="ChEBI" id="CHEBI:43474"/>
        <dbReference type="ChEBI" id="CHEBI:456216"/>
        <dbReference type="EC" id="7.1.2.2"/>
    </reaction>
</comment>
<comment type="subunit">
    <text evidence="2">F-type ATPases have 2 components, CF(1) - the catalytic core - and CF(0) - the membrane proton channel. CF(1) has five subunits: alpha(3), beta(3), gamma(1), delta(1), epsilon(1). CF(0) has four main subunits: a, b, b' and c.</text>
</comment>
<comment type="subcellular location">
    <subcellularLocation>
        <location evidence="2">Plastid</location>
        <location evidence="2">Chloroplast thylakoid membrane</location>
        <topology evidence="2">Peripheral membrane protein</topology>
    </subcellularLocation>
</comment>
<comment type="similarity">
    <text evidence="2">Belongs to the ATPase alpha/beta chains family.</text>
</comment>
<reference key="1">
    <citation type="submission" date="2007-03" db="EMBL/GenBank/DDBJ databases">
        <title>Sequencing analysis of Barbarea verna chloroplast DNA.</title>
        <authorList>
            <person name="Hosouchi T."/>
            <person name="Tsuruoka H."/>
            <person name="Kotani H."/>
        </authorList>
    </citation>
    <scope>NUCLEOTIDE SEQUENCE [LARGE SCALE GENOMIC DNA]</scope>
</reference>